<proteinExistence type="inferred from homology"/>
<gene>
    <name evidence="1" type="primary">deoA</name>
    <name type="ordered locus">Spro_0661</name>
</gene>
<comment type="function">
    <text evidence="1">The enzymes which catalyze the reversible phosphorolysis of pyrimidine nucleosides are involved in the degradation of these compounds and in their utilization as carbon and energy sources, or in the rescue of pyrimidine bases for nucleotide synthesis.</text>
</comment>
<comment type="catalytic activity">
    <reaction evidence="1">
        <text>thymidine + phosphate = 2-deoxy-alpha-D-ribose 1-phosphate + thymine</text>
        <dbReference type="Rhea" id="RHEA:16037"/>
        <dbReference type="ChEBI" id="CHEBI:17748"/>
        <dbReference type="ChEBI" id="CHEBI:17821"/>
        <dbReference type="ChEBI" id="CHEBI:43474"/>
        <dbReference type="ChEBI" id="CHEBI:57259"/>
        <dbReference type="EC" id="2.4.2.4"/>
    </reaction>
</comment>
<comment type="pathway">
    <text evidence="1">Pyrimidine metabolism; dTMP biosynthesis via salvage pathway; dTMP from thymine: step 1/2.</text>
</comment>
<comment type="subunit">
    <text evidence="1">Homodimer.</text>
</comment>
<comment type="similarity">
    <text evidence="1">Belongs to the thymidine/pyrimidine-nucleoside phosphorylase family.</text>
</comment>
<accession>A8G9H7</accession>
<keyword id="KW-0328">Glycosyltransferase</keyword>
<keyword id="KW-0808">Transferase</keyword>
<evidence type="ECO:0000255" key="1">
    <source>
        <dbReference type="HAMAP-Rule" id="MF_01628"/>
    </source>
</evidence>
<name>TYPH_SERP5</name>
<sequence length="440" mass="46836">MFLAQEIIRKKRDGQPLSEAEIRFFINGIRDNVVSEGQIAALAMTIYFHDMTMPERVALTMAMRDSGTVLDWKSLSLNGPLVDKHSTGGVGDVTSLMLGPMVAACGGYVPMISGRGLGHTGGTLDKLEAIPGFNIFPDDNAFRKIIQDVGVAIIGQTSSLAPADKRFYATRDITATVDSIPLITASILAKKLAEGLDALVMDVKVGSGAFMPTYALSADLAQAIVGVANGAGCKTTALLTDMNQVLASSAGNAVEVREAVRFLTGEYRNPRLLEVTMALCVEMLLSGGLAKDDADARAKLQAVLDNGKAAEVFGRMVAAQQGPTDFVERYDSYLPAATLSKPVYAEKQGIISAMDTRALGMAVVSLGGGRRRATDNIDYSVGLTGMARLGDKVDTQQPLAVIHANDEESWQQAAEEVRSAMVLSDKAPEVTPVVYKRITE</sequence>
<organism>
    <name type="scientific">Serratia proteamaculans (strain 568)</name>
    <dbReference type="NCBI Taxonomy" id="399741"/>
    <lineage>
        <taxon>Bacteria</taxon>
        <taxon>Pseudomonadati</taxon>
        <taxon>Pseudomonadota</taxon>
        <taxon>Gammaproteobacteria</taxon>
        <taxon>Enterobacterales</taxon>
        <taxon>Yersiniaceae</taxon>
        <taxon>Serratia</taxon>
    </lineage>
</organism>
<protein>
    <recommendedName>
        <fullName evidence="1">Thymidine phosphorylase</fullName>
        <ecNumber evidence="1">2.4.2.4</ecNumber>
    </recommendedName>
    <alternativeName>
        <fullName evidence="1">TdRPase</fullName>
    </alternativeName>
</protein>
<reference key="1">
    <citation type="submission" date="2007-09" db="EMBL/GenBank/DDBJ databases">
        <title>Complete sequence of chromosome of Serratia proteamaculans 568.</title>
        <authorList>
            <consortium name="US DOE Joint Genome Institute"/>
            <person name="Copeland A."/>
            <person name="Lucas S."/>
            <person name="Lapidus A."/>
            <person name="Barry K."/>
            <person name="Glavina del Rio T."/>
            <person name="Dalin E."/>
            <person name="Tice H."/>
            <person name="Pitluck S."/>
            <person name="Chain P."/>
            <person name="Malfatti S."/>
            <person name="Shin M."/>
            <person name="Vergez L."/>
            <person name="Schmutz J."/>
            <person name="Larimer F."/>
            <person name="Land M."/>
            <person name="Hauser L."/>
            <person name="Kyrpides N."/>
            <person name="Kim E."/>
            <person name="Taghavi S."/>
            <person name="Newman L."/>
            <person name="Vangronsveld J."/>
            <person name="van der Lelie D."/>
            <person name="Richardson P."/>
        </authorList>
    </citation>
    <scope>NUCLEOTIDE SEQUENCE [LARGE SCALE GENOMIC DNA]</scope>
    <source>
        <strain>568</strain>
    </source>
</reference>
<dbReference type="EC" id="2.4.2.4" evidence="1"/>
<dbReference type="EMBL" id="CP000826">
    <property type="protein sequence ID" value="ABV39767.1"/>
    <property type="molecule type" value="Genomic_DNA"/>
</dbReference>
<dbReference type="SMR" id="A8G9H7"/>
<dbReference type="STRING" id="399741.Spro_0661"/>
<dbReference type="KEGG" id="spe:Spro_0661"/>
<dbReference type="eggNOG" id="COG0213">
    <property type="taxonomic scope" value="Bacteria"/>
</dbReference>
<dbReference type="HOGENOM" id="CLU_025040_0_1_6"/>
<dbReference type="OrthoDB" id="9763887at2"/>
<dbReference type="UniPathway" id="UPA00578">
    <property type="reaction ID" value="UER00638"/>
</dbReference>
<dbReference type="GO" id="GO:0005829">
    <property type="term" value="C:cytosol"/>
    <property type="evidence" value="ECO:0007669"/>
    <property type="project" value="TreeGrafter"/>
</dbReference>
<dbReference type="GO" id="GO:0004645">
    <property type="term" value="F:1,4-alpha-oligoglucan phosphorylase activity"/>
    <property type="evidence" value="ECO:0007669"/>
    <property type="project" value="InterPro"/>
</dbReference>
<dbReference type="GO" id="GO:0009032">
    <property type="term" value="F:thymidine phosphorylase activity"/>
    <property type="evidence" value="ECO:0007669"/>
    <property type="project" value="UniProtKB-UniRule"/>
</dbReference>
<dbReference type="GO" id="GO:0006206">
    <property type="term" value="P:pyrimidine nucleobase metabolic process"/>
    <property type="evidence" value="ECO:0007669"/>
    <property type="project" value="InterPro"/>
</dbReference>
<dbReference type="GO" id="GO:0046104">
    <property type="term" value="P:thymidine metabolic process"/>
    <property type="evidence" value="ECO:0007669"/>
    <property type="project" value="UniProtKB-UniRule"/>
</dbReference>
<dbReference type="FunFam" id="3.40.1030.10:FF:000001">
    <property type="entry name" value="Thymidine phosphorylase"/>
    <property type="match status" value="1"/>
</dbReference>
<dbReference type="FunFam" id="3.90.1170.30:FF:000001">
    <property type="entry name" value="Thymidine phosphorylase"/>
    <property type="match status" value="1"/>
</dbReference>
<dbReference type="Gene3D" id="3.40.1030.10">
    <property type="entry name" value="Nucleoside phosphorylase/phosphoribosyltransferase catalytic domain"/>
    <property type="match status" value="1"/>
</dbReference>
<dbReference type="Gene3D" id="3.90.1170.30">
    <property type="entry name" value="Pyrimidine nucleoside phosphorylase-like, C-terminal domain"/>
    <property type="match status" value="1"/>
</dbReference>
<dbReference type="Gene3D" id="1.20.970.10">
    <property type="entry name" value="Transferase, Pyrimidine Nucleoside Phosphorylase, Chain C"/>
    <property type="match status" value="1"/>
</dbReference>
<dbReference type="HAMAP" id="MF_01628">
    <property type="entry name" value="Thymid_phosp"/>
    <property type="match status" value="1"/>
</dbReference>
<dbReference type="InterPro" id="IPR000312">
    <property type="entry name" value="Glycosyl_Trfase_fam3"/>
</dbReference>
<dbReference type="InterPro" id="IPR017459">
    <property type="entry name" value="Glycosyl_Trfase_fam3_N_dom"/>
</dbReference>
<dbReference type="InterPro" id="IPR036320">
    <property type="entry name" value="Glycosyl_Trfase_fam3_N_dom_sf"/>
</dbReference>
<dbReference type="InterPro" id="IPR035902">
    <property type="entry name" value="Nuc_phospho_transferase"/>
</dbReference>
<dbReference type="InterPro" id="IPR036566">
    <property type="entry name" value="PYNP-like_C_sf"/>
</dbReference>
<dbReference type="InterPro" id="IPR013102">
    <property type="entry name" value="PYNP_C"/>
</dbReference>
<dbReference type="InterPro" id="IPR018090">
    <property type="entry name" value="Pyrmidine_PPas_bac/euk"/>
</dbReference>
<dbReference type="InterPro" id="IPR017872">
    <property type="entry name" value="Pyrmidine_PPase_CS"/>
</dbReference>
<dbReference type="InterPro" id="IPR000053">
    <property type="entry name" value="Thymidine/pyrmidine_PPase"/>
</dbReference>
<dbReference type="InterPro" id="IPR013465">
    <property type="entry name" value="Thymidine_Pase"/>
</dbReference>
<dbReference type="NCBIfam" id="NF004490">
    <property type="entry name" value="PRK05820.1"/>
    <property type="match status" value="1"/>
</dbReference>
<dbReference type="NCBIfam" id="TIGR02643">
    <property type="entry name" value="T_phosphoryl"/>
    <property type="match status" value="1"/>
</dbReference>
<dbReference type="NCBIfam" id="TIGR02644">
    <property type="entry name" value="Y_phosphoryl"/>
    <property type="match status" value="1"/>
</dbReference>
<dbReference type="PANTHER" id="PTHR10515">
    <property type="entry name" value="THYMIDINE PHOSPHORYLASE"/>
    <property type="match status" value="1"/>
</dbReference>
<dbReference type="PANTHER" id="PTHR10515:SF0">
    <property type="entry name" value="THYMIDINE PHOSPHORYLASE"/>
    <property type="match status" value="1"/>
</dbReference>
<dbReference type="Pfam" id="PF02885">
    <property type="entry name" value="Glycos_trans_3N"/>
    <property type="match status" value="1"/>
</dbReference>
<dbReference type="Pfam" id="PF00591">
    <property type="entry name" value="Glycos_transf_3"/>
    <property type="match status" value="1"/>
</dbReference>
<dbReference type="Pfam" id="PF07831">
    <property type="entry name" value="PYNP_C"/>
    <property type="match status" value="1"/>
</dbReference>
<dbReference type="PIRSF" id="PIRSF000478">
    <property type="entry name" value="TP_PyNP"/>
    <property type="match status" value="1"/>
</dbReference>
<dbReference type="SMART" id="SM00941">
    <property type="entry name" value="PYNP_C"/>
    <property type="match status" value="1"/>
</dbReference>
<dbReference type="SUPFAM" id="SSF52418">
    <property type="entry name" value="Nucleoside phosphorylase/phosphoribosyltransferase catalytic domain"/>
    <property type="match status" value="1"/>
</dbReference>
<dbReference type="SUPFAM" id="SSF47648">
    <property type="entry name" value="Nucleoside phosphorylase/phosphoribosyltransferase N-terminal domain"/>
    <property type="match status" value="1"/>
</dbReference>
<dbReference type="SUPFAM" id="SSF54680">
    <property type="entry name" value="Pyrimidine nucleoside phosphorylase C-terminal domain"/>
    <property type="match status" value="1"/>
</dbReference>
<dbReference type="PROSITE" id="PS00647">
    <property type="entry name" value="THYMID_PHOSPHORYLASE"/>
    <property type="match status" value="1"/>
</dbReference>
<feature type="chain" id="PRO_1000069664" description="Thymidine phosphorylase">
    <location>
        <begin position="1"/>
        <end position="440"/>
    </location>
</feature>